<accession>B0T2D4</accession>
<proteinExistence type="inferred from homology"/>
<evidence type="ECO:0000255" key="1">
    <source>
        <dbReference type="HAMAP-Rule" id="MF_01333"/>
    </source>
</evidence>
<evidence type="ECO:0000305" key="2"/>
<comment type="function">
    <text evidence="1">This is one of the proteins that bind and probably mediate the attachment of the 5S RNA into the large ribosomal subunit, where it forms part of the central protuberance. In the 70S ribosome it contacts protein S13 of the 30S subunit (bridge B1b), connecting the 2 subunits; this bridge is implicated in subunit movement. Contacts the P site tRNA; the 5S rRNA and some of its associated proteins might help stabilize positioning of ribosome-bound tRNAs.</text>
</comment>
<comment type="subunit">
    <text evidence="1">Part of the 50S ribosomal subunit; part of the 5S rRNA/L5/L18/L25 subcomplex. Contacts the 5S rRNA and the P site tRNA. Forms a bridge to the 30S subunit in the 70S ribosome.</text>
</comment>
<comment type="similarity">
    <text evidence="1">Belongs to the universal ribosomal protein uL5 family.</text>
</comment>
<protein>
    <recommendedName>
        <fullName evidence="1">Large ribosomal subunit protein uL5</fullName>
    </recommendedName>
    <alternativeName>
        <fullName evidence="2">50S ribosomal protein L5</fullName>
    </alternativeName>
</protein>
<reference key="1">
    <citation type="submission" date="2008-01" db="EMBL/GenBank/DDBJ databases">
        <title>Complete sequence of chromosome of Caulobacter sp. K31.</title>
        <authorList>
            <consortium name="US DOE Joint Genome Institute"/>
            <person name="Copeland A."/>
            <person name="Lucas S."/>
            <person name="Lapidus A."/>
            <person name="Barry K."/>
            <person name="Glavina del Rio T."/>
            <person name="Dalin E."/>
            <person name="Tice H."/>
            <person name="Pitluck S."/>
            <person name="Bruce D."/>
            <person name="Goodwin L."/>
            <person name="Thompson L.S."/>
            <person name="Brettin T."/>
            <person name="Detter J.C."/>
            <person name="Han C."/>
            <person name="Schmutz J."/>
            <person name="Larimer F."/>
            <person name="Land M."/>
            <person name="Hauser L."/>
            <person name="Kyrpides N."/>
            <person name="Kim E."/>
            <person name="Stephens C."/>
            <person name="Richardson P."/>
        </authorList>
    </citation>
    <scope>NUCLEOTIDE SEQUENCE [LARGE SCALE GENOMIC DNA]</scope>
    <source>
        <strain>K31</strain>
    </source>
</reference>
<dbReference type="EMBL" id="CP000927">
    <property type="protein sequence ID" value="ABZ70755.1"/>
    <property type="molecule type" value="Genomic_DNA"/>
</dbReference>
<dbReference type="SMR" id="B0T2D4"/>
<dbReference type="STRING" id="366602.Caul_1626"/>
<dbReference type="KEGG" id="cak:Caul_1626"/>
<dbReference type="eggNOG" id="COG0094">
    <property type="taxonomic scope" value="Bacteria"/>
</dbReference>
<dbReference type="HOGENOM" id="CLU_061015_2_1_5"/>
<dbReference type="OrthoDB" id="9806626at2"/>
<dbReference type="GO" id="GO:1990904">
    <property type="term" value="C:ribonucleoprotein complex"/>
    <property type="evidence" value="ECO:0007669"/>
    <property type="project" value="UniProtKB-KW"/>
</dbReference>
<dbReference type="GO" id="GO:0005840">
    <property type="term" value="C:ribosome"/>
    <property type="evidence" value="ECO:0007669"/>
    <property type="project" value="UniProtKB-KW"/>
</dbReference>
<dbReference type="GO" id="GO:0019843">
    <property type="term" value="F:rRNA binding"/>
    <property type="evidence" value="ECO:0007669"/>
    <property type="project" value="UniProtKB-UniRule"/>
</dbReference>
<dbReference type="GO" id="GO:0003735">
    <property type="term" value="F:structural constituent of ribosome"/>
    <property type="evidence" value="ECO:0007669"/>
    <property type="project" value="InterPro"/>
</dbReference>
<dbReference type="GO" id="GO:0000049">
    <property type="term" value="F:tRNA binding"/>
    <property type="evidence" value="ECO:0007669"/>
    <property type="project" value="UniProtKB-UniRule"/>
</dbReference>
<dbReference type="GO" id="GO:0006412">
    <property type="term" value="P:translation"/>
    <property type="evidence" value="ECO:0007669"/>
    <property type="project" value="UniProtKB-UniRule"/>
</dbReference>
<dbReference type="FunFam" id="3.30.1440.10:FF:000001">
    <property type="entry name" value="50S ribosomal protein L5"/>
    <property type="match status" value="1"/>
</dbReference>
<dbReference type="Gene3D" id="3.30.1440.10">
    <property type="match status" value="1"/>
</dbReference>
<dbReference type="HAMAP" id="MF_01333_B">
    <property type="entry name" value="Ribosomal_uL5_B"/>
    <property type="match status" value="1"/>
</dbReference>
<dbReference type="InterPro" id="IPR002132">
    <property type="entry name" value="Ribosomal_uL5"/>
</dbReference>
<dbReference type="InterPro" id="IPR020930">
    <property type="entry name" value="Ribosomal_uL5_bac-type"/>
</dbReference>
<dbReference type="InterPro" id="IPR031309">
    <property type="entry name" value="Ribosomal_uL5_C"/>
</dbReference>
<dbReference type="InterPro" id="IPR020929">
    <property type="entry name" value="Ribosomal_uL5_CS"/>
</dbReference>
<dbReference type="InterPro" id="IPR022803">
    <property type="entry name" value="Ribosomal_uL5_dom_sf"/>
</dbReference>
<dbReference type="InterPro" id="IPR031310">
    <property type="entry name" value="Ribosomal_uL5_N"/>
</dbReference>
<dbReference type="NCBIfam" id="NF000585">
    <property type="entry name" value="PRK00010.1"/>
    <property type="match status" value="1"/>
</dbReference>
<dbReference type="PANTHER" id="PTHR11994">
    <property type="entry name" value="60S RIBOSOMAL PROTEIN L11-RELATED"/>
    <property type="match status" value="1"/>
</dbReference>
<dbReference type="Pfam" id="PF00281">
    <property type="entry name" value="Ribosomal_L5"/>
    <property type="match status" value="1"/>
</dbReference>
<dbReference type="Pfam" id="PF00673">
    <property type="entry name" value="Ribosomal_L5_C"/>
    <property type="match status" value="1"/>
</dbReference>
<dbReference type="PIRSF" id="PIRSF002161">
    <property type="entry name" value="Ribosomal_L5"/>
    <property type="match status" value="1"/>
</dbReference>
<dbReference type="SUPFAM" id="SSF55282">
    <property type="entry name" value="RL5-like"/>
    <property type="match status" value="1"/>
</dbReference>
<dbReference type="PROSITE" id="PS00358">
    <property type="entry name" value="RIBOSOMAL_L5"/>
    <property type="match status" value="1"/>
</dbReference>
<keyword id="KW-0687">Ribonucleoprotein</keyword>
<keyword id="KW-0689">Ribosomal protein</keyword>
<keyword id="KW-0694">RNA-binding</keyword>
<keyword id="KW-0699">rRNA-binding</keyword>
<keyword id="KW-0820">tRNA-binding</keyword>
<sequence>MVDQAYEPRLKSEYRARIRAAMKEQFAYTNEMQIPKLDKIVLNMGIGEAVADSKKAQTALKDLMAIAGQKPVATKARKSIAGFKLREGMVVGAKVTLRKDKMYEFLDRLVTIALPRVKDFRGLNGKSFDGRGNYAMGLKEHLVFPEINYDQIEQIWGMDIIVCTTAKTDQEAKALLKEFQFPFTN</sequence>
<feature type="chain" id="PRO_1000086583" description="Large ribosomal subunit protein uL5">
    <location>
        <begin position="1"/>
        <end position="185"/>
    </location>
</feature>
<organism>
    <name type="scientific">Caulobacter sp. (strain K31)</name>
    <dbReference type="NCBI Taxonomy" id="366602"/>
    <lineage>
        <taxon>Bacteria</taxon>
        <taxon>Pseudomonadati</taxon>
        <taxon>Pseudomonadota</taxon>
        <taxon>Alphaproteobacteria</taxon>
        <taxon>Caulobacterales</taxon>
        <taxon>Caulobacteraceae</taxon>
        <taxon>Caulobacter</taxon>
    </lineage>
</organism>
<name>RL5_CAUSK</name>
<gene>
    <name evidence="1" type="primary">rplE</name>
    <name type="ordered locus">Caul_1626</name>
</gene>